<name>Y5958_STRCO</name>
<comment type="function">
    <text evidence="1">Probably part of an ABC transporter complex. Responsible for energy coupling to the transport system (By similarity).</text>
</comment>
<comment type="subcellular location">
    <subcellularLocation>
        <location evidence="1">Cell membrane</location>
        <topology evidence="1">Peripheral membrane protein</topology>
    </subcellularLocation>
</comment>
<comment type="similarity">
    <text evidence="3">Belongs to the ABC transporter superfamily.</text>
</comment>
<proteinExistence type="inferred from homology"/>
<keyword id="KW-0067">ATP-binding</keyword>
<keyword id="KW-1003">Cell membrane</keyword>
<keyword id="KW-0472">Membrane</keyword>
<keyword id="KW-0547">Nucleotide-binding</keyword>
<keyword id="KW-1185">Reference proteome</keyword>
<keyword id="KW-1278">Translocase</keyword>
<keyword id="KW-0813">Transport</keyword>
<sequence length="284" mass="29603">MSEPAQPSEPAPALVALRGAAFAYEEGPDVLTGLDFAVREGRALALLGRNGSGKTTLMRLLSGGLKPHTGTLTLGGEPVAYDRKGLTRLRTTVQLVVQDPDDQLFAASVGQDVSFGPLNLGLSDAEVRSRVGEALAALDISGLAERPTHLLSYGQRKRTAIAGAVAMRPRVLILDEPTAGLDPDGQERLLATLDGLRAGGTTVVMATHDVDLALRWSDDAALLTPEGVRTGPTAATLARTDLLRRAGLRLPWGVAATGLLRARGLLADSATGPRTAEELAALAE</sequence>
<evidence type="ECO:0000250" key="1"/>
<evidence type="ECO:0000255" key="2">
    <source>
        <dbReference type="PROSITE-ProRule" id="PRU00434"/>
    </source>
</evidence>
<evidence type="ECO:0000305" key="3"/>
<gene>
    <name type="ordered locus">SCO5958</name>
    <name type="ORF">SC7H1.28c</name>
</gene>
<protein>
    <recommendedName>
        <fullName>Putative ABC transporter ATP-binding protein SCO5958</fullName>
        <ecNumber>7.-.-.-</ecNumber>
    </recommendedName>
</protein>
<dbReference type="EC" id="7.-.-.-"/>
<dbReference type="EMBL" id="AL939125">
    <property type="protein sequence ID" value="CAA16215.1"/>
    <property type="molecule type" value="Genomic_DNA"/>
</dbReference>
<dbReference type="PIR" id="T35723">
    <property type="entry name" value="T35723"/>
</dbReference>
<dbReference type="RefSeq" id="NP_630075.1">
    <property type="nucleotide sequence ID" value="NC_003888.3"/>
</dbReference>
<dbReference type="RefSeq" id="WP_011030564.1">
    <property type="nucleotide sequence ID" value="NZ_VNID01000007.1"/>
</dbReference>
<dbReference type="SMR" id="O54187"/>
<dbReference type="STRING" id="100226.gene:17763618"/>
<dbReference type="PaxDb" id="100226-SCO5958"/>
<dbReference type="KEGG" id="sco:SCO5958"/>
<dbReference type="PATRIC" id="fig|100226.15.peg.6055"/>
<dbReference type="eggNOG" id="COG1122">
    <property type="taxonomic scope" value="Bacteria"/>
</dbReference>
<dbReference type="HOGENOM" id="CLU_000604_1_22_11"/>
<dbReference type="InParanoid" id="O54187"/>
<dbReference type="OrthoDB" id="9806471at2"/>
<dbReference type="PhylomeDB" id="O54187"/>
<dbReference type="Proteomes" id="UP000001973">
    <property type="component" value="Chromosome"/>
</dbReference>
<dbReference type="GO" id="GO:0043190">
    <property type="term" value="C:ATP-binding cassette (ABC) transporter complex"/>
    <property type="evidence" value="ECO:0000318"/>
    <property type="project" value="GO_Central"/>
</dbReference>
<dbReference type="GO" id="GO:0005524">
    <property type="term" value="F:ATP binding"/>
    <property type="evidence" value="ECO:0000318"/>
    <property type="project" value="GO_Central"/>
</dbReference>
<dbReference type="GO" id="GO:0016887">
    <property type="term" value="F:ATP hydrolysis activity"/>
    <property type="evidence" value="ECO:0007669"/>
    <property type="project" value="InterPro"/>
</dbReference>
<dbReference type="GO" id="GO:0042626">
    <property type="term" value="F:ATPase-coupled transmembrane transporter activity"/>
    <property type="evidence" value="ECO:0000318"/>
    <property type="project" value="GO_Central"/>
</dbReference>
<dbReference type="GO" id="GO:0006824">
    <property type="term" value="P:cobalt ion transport"/>
    <property type="evidence" value="ECO:0007669"/>
    <property type="project" value="InterPro"/>
</dbReference>
<dbReference type="CDD" id="cd03225">
    <property type="entry name" value="ABC_cobalt_CbiO_domain1"/>
    <property type="match status" value="1"/>
</dbReference>
<dbReference type="FunFam" id="3.40.50.300:FF:000224">
    <property type="entry name" value="Energy-coupling factor transporter ATP-binding protein EcfA"/>
    <property type="match status" value="1"/>
</dbReference>
<dbReference type="Gene3D" id="3.40.50.300">
    <property type="entry name" value="P-loop containing nucleotide triphosphate hydrolases"/>
    <property type="match status" value="1"/>
</dbReference>
<dbReference type="InterPro" id="IPR003593">
    <property type="entry name" value="AAA+_ATPase"/>
</dbReference>
<dbReference type="InterPro" id="IPR003439">
    <property type="entry name" value="ABC_transporter-like_ATP-bd"/>
</dbReference>
<dbReference type="InterPro" id="IPR015856">
    <property type="entry name" value="ABC_transpr_CbiO/EcfA_su"/>
</dbReference>
<dbReference type="InterPro" id="IPR005876">
    <property type="entry name" value="Co_trans_ATP-bd"/>
</dbReference>
<dbReference type="InterPro" id="IPR050095">
    <property type="entry name" value="ECF_ABC_transporter_ATP-bd"/>
</dbReference>
<dbReference type="InterPro" id="IPR027417">
    <property type="entry name" value="P-loop_NTPase"/>
</dbReference>
<dbReference type="NCBIfam" id="TIGR01166">
    <property type="entry name" value="cbiO"/>
    <property type="match status" value="1"/>
</dbReference>
<dbReference type="PANTHER" id="PTHR43553:SF24">
    <property type="entry name" value="ENERGY-COUPLING FACTOR TRANSPORTER ATP-BINDING PROTEIN ECFA1"/>
    <property type="match status" value="1"/>
</dbReference>
<dbReference type="PANTHER" id="PTHR43553">
    <property type="entry name" value="HEAVY METAL TRANSPORTER"/>
    <property type="match status" value="1"/>
</dbReference>
<dbReference type="Pfam" id="PF00005">
    <property type="entry name" value="ABC_tran"/>
    <property type="match status" value="1"/>
</dbReference>
<dbReference type="SMART" id="SM00382">
    <property type="entry name" value="AAA"/>
    <property type="match status" value="1"/>
</dbReference>
<dbReference type="SUPFAM" id="SSF52540">
    <property type="entry name" value="P-loop containing nucleoside triphosphate hydrolases"/>
    <property type="match status" value="1"/>
</dbReference>
<dbReference type="PROSITE" id="PS50893">
    <property type="entry name" value="ABC_TRANSPORTER_2"/>
    <property type="match status" value="1"/>
</dbReference>
<feature type="chain" id="PRO_0000092094" description="Putative ABC transporter ATP-binding protein SCO5958">
    <location>
        <begin position="1"/>
        <end position="284"/>
    </location>
</feature>
<feature type="domain" description="ABC transporter" evidence="2">
    <location>
        <begin position="15"/>
        <end position="250"/>
    </location>
</feature>
<feature type="binding site" evidence="2">
    <location>
        <begin position="48"/>
        <end position="55"/>
    </location>
    <ligand>
        <name>ATP</name>
        <dbReference type="ChEBI" id="CHEBI:30616"/>
    </ligand>
</feature>
<organism>
    <name type="scientific">Streptomyces coelicolor (strain ATCC BAA-471 / A3(2) / M145)</name>
    <dbReference type="NCBI Taxonomy" id="100226"/>
    <lineage>
        <taxon>Bacteria</taxon>
        <taxon>Bacillati</taxon>
        <taxon>Actinomycetota</taxon>
        <taxon>Actinomycetes</taxon>
        <taxon>Kitasatosporales</taxon>
        <taxon>Streptomycetaceae</taxon>
        <taxon>Streptomyces</taxon>
        <taxon>Streptomyces albidoflavus group</taxon>
    </lineage>
</organism>
<accession>O54187</accession>
<reference key="1">
    <citation type="journal article" date="2002" name="Nature">
        <title>Complete genome sequence of the model actinomycete Streptomyces coelicolor A3(2).</title>
        <authorList>
            <person name="Bentley S.D."/>
            <person name="Chater K.F."/>
            <person name="Cerdeno-Tarraga A.-M."/>
            <person name="Challis G.L."/>
            <person name="Thomson N.R."/>
            <person name="James K.D."/>
            <person name="Harris D.E."/>
            <person name="Quail M.A."/>
            <person name="Kieser H."/>
            <person name="Harper D."/>
            <person name="Bateman A."/>
            <person name="Brown S."/>
            <person name="Chandra G."/>
            <person name="Chen C.W."/>
            <person name="Collins M."/>
            <person name="Cronin A."/>
            <person name="Fraser A."/>
            <person name="Goble A."/>
            <person name="Hidalgo J."/>
            <person name="Hornsby T."/>
            <person name="Howarth S."/>
            <person name="Huang C.-H."/>
            <person name="Kieser T."/>
            <person name="Larke L."/>
            <person name="Murphy L.D."/>
            <person name="Oliver K."/>
            <person name="O'Neil S."/>
            <person name="Rabbinowitsch E."/>
            <person name="Rajandream M.A."/>
            <person name="Rutherford K.M."/>
            <person name="Rutter S."/>
            <person name="Seeger K."/>
            <person name="Saunders D."/>
            <person name="Sharp S."/>
            <person name="Squares R."/>
            <person name="Squares S."/>
            <person name="Taylor K."/>
            <person name="Warren T."/>
            <person name="Wietzorrek A."/>
            <person name="Woodward J.R."/>
            <person name="Barrell B.G."/>
            <person name="Parkhill J."/>
            <person name="Hopwood D.A."/>
        </authorList>
    </citation>
    <scope>NUCLEOTIDE SEQUENCE [LARGE SCALE GENOMIC DNA]</scope>
    <source>
        <strain>ATCC BAA-471 / A3(2) / M145</strain>
    </source>
</reference>